<organism>
    <name type="scientific">Phormingochilus everetti</name>
    <name type="common">Malaysian purple earth tiger tarantula</name>
    <dbReference type="NCBI Taxonomy" id="2751878"/>
    <lineage>
        <taxon>Eukaryota</taxon>
        <taxon>Metazoa</taxon>
        <taxon>Ecdysozoa</taxon>
        <taxon>Arthropoda</taxon>
        <taxon>Chelicerata</taxon>
        <taxon>Arachnida</taxon>
        <taxon>Araneae</taxon>
        <taxon>Mygalomorphae</taxon>
        <taxon>Theraphosidae</taxon>
        <taxon>Phormingochilus</taxon>
    </lineage>
</organism>
<keyword id="KW-0903">Direct protein sequencing</keyword>
<keyword id="KW-1015">Disulfide bond</keyword>
<keyword id="KW-0872">Ion channel impairing toxin</keyword>
<keyword id="KW-0960">Knottin</keyword>
<keyword id="KW-0528">Neurotoxin</keyword>
<keyword id="KW-0964">Secreted</keyword>
<keyword id="KW-0800">Toxin</keyword>
<keyword id="KW-0738">Voltage-gated sodium channel impairing toxin</keyword>
<accession>P0DQN1</accession>
<evidence type="ECO:0000250" key="1">
    <source>
        <dbReference type="UniProtKB" id="P83480"/>
    </source>
</evidence>
<evidence type="ECO:0000269" key="2">
    <source>
    </source>
</evidence>
<evidence type="ECO:0000303" key="3">
    <source>
    </source>
</evidence>
<evidence type="ECO:0000305" key="4"/>
<evidence type="ECO:0000305" key="5">
    <source>
    </source>
</evidence>
<reference key="1">
    <citation type="journal article" date="2020" name="Biochem. Pharmacol.">
        <title>Mutational analysis of ProTx-I and the novel venom peptide Pe1b provide insight into residues responsible for selective inhibition of the analgesic drug target NaV1.7.</title>
        <authorList>
            <person name="Rupasinghe D.B."/>
            <person name="Herzig V."/>
            <person name="Vetter I."/>
            <person name="Dekan Z."/>
            <person name="Gilchrist J."/>
            <person name="Bosmans F."/>
            <person name="Alewood P.F."/>
            <person name="Lewis R.J."/>
            <person name="King G.F."/>
        </authorList>
    </citation>
    <scope>PROTEIN SEQUENCE</scope>
    <scope>FUNCTION</scope>
    <scope>SUBCELLULAR LOCATION</scope>
    <source>
        <tissue>Venom</tissue>
    </source>
</reference>
<name>PE1A_PHOEV</name>
<proteinExistence type="evidence at protein level"/>
<protein>
    <recommendedName>
        <fullName evidence="3">Beta/mu-theraphotoxin-Pe1a</fullName>
        <shortName evidence="3">Beta/mu-TRTX-Pe1a</shortName>
    </recommendedName>
</protein>
<comment type="function">
    <text evidence="2">Ion channel impairing toxin that inhibits voltage-gated sodium channels. The recombinantly expressed toxin shows a weak activity against Nav1.7/SCN9A (25% inhibition at 10 uM), and shifts the voltage dependence of channel activation to more depolarized potentials.</text>
</comment>
<comment type="subcellular location">
    <subcellularLocation>
        <location evidence="2">Secreted</location>
    </subcellularLocation>
</comment>
<comment type="tissue specificity">
    <text evidence="5">Expressed by the venom gland.</text>
</comment>
<comment type="domain">
    <text evidence="1">The presence of a 'disulfide through disulfide knot' structurally defines this protein as a knottin.</text>
</comment>
<comment type="similarity">
    <text evidence="4">Belongs to the neurotoxin 10 (Hwtx-1) family. 54 (ProTx-1) subfamily.</text>
</comment>
<sequence length="34" mass="4075">ECKYLWGTCSKDEDCCAHLGCNRKHDWCGWDYTF</sequence>
<dbReference type="SMR" id="P0DQN1"/>
<dbReference type="GO" id="GO:0005576">
    <property type="term" value="C:extracellular region"/>
    <property type="evidence" value="ECO:0007669"/>
    <property type="project" value="UniProtKB-SubCell"/>
</dbReference>
<dbReference type="GO" id="GO:0008200">
    <property type="term" value="F:ion channel inhibitor activity"/>
    <property type="evidence" value="ECO:0007669"/>
    <property type="project" value="InterPro"/>
</dbReference>
<dbReference type="GO" id="GO:0017080">
    <property type="term" value="F:sodium channel regulator activity"/>
    <property type="evidence" value="ECO:0007669"/>
    <property type="project" value="UniProtKB-KW"/>
</dbReference>
<dbReference type="GO" id="GO:0090729">
    <property type="term" value="F:toxin activity"/>
    <property type="evidence" value="ECO:0007669"/>
    <property type="project" value="UniProtKB-KW"/>
</dbReference>
<dbReference type="InterPro" id="IPR011696">
    <property type="entry name" value="Huwentoxin-1"/>
</dbReference>
<dbReference type="Pfam" id="PF07740">
    <property type="entry name" value="Toxin_12"/>
    <property type="match status" value="1"/>
</dbReference>
<dbReference type="SUPFAM" id="SSF57059">
    <property type="entry name" value="omega toxin-like"/>
    <property type="match status" value="1"/>
</dbReference>
<feature type="chain" id="PRO_0000451451" description="Beta/mu-theraphotoxin-Pe1a" evidence="2">
    <location>
        <begin position="1"/>
        <end position="34"/>
    </location>
</feature>
<feature type="disulfide bond" evidence="1">
    <location>
        <begin position="2"/>
        <end position="16"/>
    </location>
</feature>
<feature type="disulfide bond" evidence="1">
    <location>
        <begin position="9"/>
        <end position="21"/>
    </location>
</feature>
<feature type="disulfide bond" evidence="1">
    <location>
        <begin position="15"/>
        <end position="28"/>
    </location>
</feature>